<evidence type="ECO:0000255" key="1">
    <source>
        <dbReference type="HAMAP-Rule" id="MF_00740"/>
    </source>
</evidence>
<name>DEOB_LACLS</name>
<protein>
    <recommendedName>
        <fullName evidence="1">Phosphopentomutase</fullName>
        <ecNumber evidence="1">5.4.2.7</ecNumber>
    </recommendedName>
    <alternativeName>
        <fullName evidence="1">Phosphodeoxyribomutase</fullName>
    </alternativeName>
</protein>
<comment type="function">
    <text evidence="1">Isomerase that catalyzes the conversion of deoxy-ribose 1-phosphate (dRib-1-P) and ribose 1-phosphate (Rib-1-P) to deoxy-ribose 5-phosphate (dRib-5-P) and ribose 5-phosphate (Rib-5-P), respectively.</text>
</comment>
<comment type="catalytic activity">
    <reaction evidence="1">
        <text>2-deoxy-alpha-D-ribose 1-phosphate = 2-deoxy-D-ribose 5-phosphate</text>
        <dbReference type="Rhea" id="RHEA:27658"/>
        <dbReference type="ChEBI" id="CHEBI:57259"/>
        <dbReference type="ChEBI" id="CHEBI:62877"/>
        <dbReference type="EC" id="5.4.2.7"/>
    </reaction>
</comment>
<comment type="catalytic activity">
    <reaction evidence="1">
        <text>alpha-D-ribose 1-phosphate = D-ribose 5-phosphate</text>
        <dbReference type="Rhea" id="RHEA:18793"/>
        <dbReference type="ChEBI" id="CHEBI:57720"/>
        <dbReference type="ChEBI" id="CHEBI:78346"/>
        <dbReference type="EC" id="5.4.2.7"/>
    </reaction>
</comment>
<comment type="cofactor">
    <cofactor evidence="1">
        <name>Mn(2+)</name>
        <dbReference type="ChEBI" id="CHEBI:29035"/>
    </cofactor>
    <text evidence="1">Binds 2 manganese ions.</text>
</comment>
<comment type="pathway">
    <text evidence="1">Carbohydrate degradation; 2-deoxy-D-ribose 1-phosphate degradation; D-glyceraldehyde 3-phosphate and acetaldehyde from 2-deoxy-alpha-D-ribose 1-phosphate: step 1/2.</text>
</comment>
<comment type="subcellular location">
    <subcellularLocation>
        <location evidence="1">Cytoplasm</location>
    </subcellularLocation>
</comment>
<comment type="similarity">
    <text evidence="1">Belongs to the phosphopentomutase family.</text>
</comment>
<keyword id="KW-0963">Cytoplasm</keyword>
<keyword id="KW-0413">Isomerase</keyword>
<keyword id="KW-0464">Manganese</keyword>
<keyword id="KW-0479">Metal-binding</keyword>
<gene>
    <name evidence="1" type="primary">deoB</name>
    <name type="ordered locus">LACR_1001</name>
</gene>
<organism>
    <name type="scientific">Lactococcus lactis subsp. cremoris (strain SK11)</name>
    <dbReference type="NCBI Taxonomy" id="272622"/>
    <lineage>
        <taxon>Bacteria</taxon>
        <taxon>Bacillati</taxon>
        <taxon>Bacillota</taxon>
        <taxon>Bacilli</taxon>
        <taxon>Lactobacillales</taxon>
        <taxon>Streptococcaceae</taxon>
        <taxon>Lactococcus</taxon>
        <taxon>Lactococcus cremoris subsp. cremoris</taxon>
    </lineage>
</organism>
<sequence>MPKKFGRIHLVVMDSVGIGAAPDADKFFNHDVETHEAINDVKSDTIGHISEIRGLDVPNLQKLGWGNIPRESPLKTIPAAQKPAAYVTKLEEISKGKDTMTGHWEIMGLNIQTPFPTYPEGYPEDLLEKIEEFSGRKIIREANKPYSGTAVIEDFGPRQLETGELIIYTSADPVLQIAAHEDVISREELYKICEYVRSITLEGSGIMIGRIIARPYVGEAGNFERTDGRRDYALSPFAETVLEKLYKAGIDTYSVGKISDIFNTVGVKYDMGHNHNDMDGVDRLLKAMTKTEFTEGFSFTNLVDFDAKYGHRRDVEGYGKAIEDFDGRLPEIIDAMNEDDLLMITADHGNDPSYVGTDHTREYIPLVIFSKSFKEPKVLPVGHFADISATIAENFSVKKAQTGESFLDALV</sequence>
<dbReference type="EC" id="5.4.2.7" evidence="1"/>
<dbReference type="EMBL" id="CP000425">
    <property type="protein sequence ID" value="ABJ72540.1"/>
    <property type="molecule type" value="Genomic_DNA"/>
</dbReference>
<dbReference type="RefSeq" id="WP_011675881.1">
    <property type="nucleotide sequence ID" value="NC_008527.1"/>
</dbReference>
<dbReference type="SMR" id="Q02ZT2"/>
<dbReference type="KEGG" id="llc:LACR_1001"/>
<dbReference type="HOGENOM" id="CLU_053861_0_0_9"/>
<dbReference type="UniPathway" id="UPA00002">
    <property type="reaction ID" value="UER00467"/>
</dbReference>
<dbReference type="Proteomes" id="UP000000240">
    <property type="component" value="Chromosome"/>
</dbReference>
<dbReference type="GO" id="GO:0005829">
    <property type="term" value="C:cytosol"/>
    <property type="evidence" value="ECO:0007669"/>
    <property type="project" value="TreeGrafter"/>
</dbReference>
<dbReference type="GO" id="GO:0000287">
    <property type="term" value="F:magnesium ion binding"/>
    <property type="evidence" value="ECO:0007669"/>
    <property type="project" value="InterPro"/>
</dbReference>
<dbReference type="GO" id="GO:0030145">
    <property type="term" value="F:manganese ion binding"/>
    <property type="evidence" value="ECO:0007669"/>
    <property type="project" value="UniProtKB-UniRule"/>
</dbReference>
<dbReference type="GO" id="GO:0008973">
    <property type="term" value="F:phosphopentomutase activity"/>
    <property type="evidence" value="ECO:0007669"/>
    <property type="project" value="UniProtKB-UniRule"/>
</dbReference>
<dbReference type="GO" id="GO:0006018">
    <property type="term" value="P:2-deoxyribose 1-phosphate catabolic process"/>
    <property type="evidence" value="ECO:0007669"/>
    <property type="project" value="UniProtKB-UniRule"/>
</dbReference>
<dbReference type="GO" id="GO:0006015">
    <property type="term" value="P:5-phosphoribose 1-diphosphate biosynthetic process"/>
    <property type="evidence" value="ECO:0007669"/>
    <property type="project" value="UniProtKB-UniPathway"/>
</dbReference>
<dbReference type="GO" id="GO:0043094">
    <property type="term" value="P:metabolic compound salvage"/>
    <property type="evidence" value="ECO:0007669"/>
    <property type="project" value="InterPro"/>
</dbReference>
<dbReference type="GO" id="GO:0009117">
    <property type="term" value="P:nucleotide metabolic process"/>
    <property type="evidence" value="ECO:0007669"/>
    <property type="project" value="InterPro"/>
</dbReference>
<dbReference type="CDD" id="cd16009">
    <property type="entry name" value="PPM"/>
    <property type="match status" value="1"/>
</dbReference>
<dbReference type="FunFam" id="3.30.70.1250:FF:000001">
    <property type="entry name" value="Phosphopentomutase"/>
    <property type="match status" value="1"/>
</dbReference>
<dbReference type="Gene3D" id="3.40.720.10">
    <property type="entry name" value="Alkaline Phosphatase, subunit A"/>
    <property type="match status" value="1"/>
</dbReference>
<dbReference type="Gene3D" id="3.30.70.1250">
    <property type="entry name" value="Phosphopentomutase"/>
    <property type="match status" value="1"/>
</dbReference>
<dbReference type="HAMAP" id="MF_00740">
    <property type="entry name" value="Phosphopentomut"/>
    <property type="match status" value="1"/>
</dbReference>
<dbReference type="InterPro" id="IPR017850">
    <property type="entry name" value="Alkaline_phosphatase_core_sf"/>
</dbReference>
<dbReference type="InterPro" id="IPR010045">
    <property type="entry name" value="DeoB"/>
</dbReference>
<dbReference type="InterPro" id="IPR006124">
    <property type="entry name" value="Metalloenzyme"/>
</dbReference>
<dbReference type="InterPro" id="IPR024052">
    <property type="entry name" value="Phosphopentomutase_DeoB_cap_sf"/>
</dbReference>
<dbReference type="NCBIfam" id="TIGR01696">
    <property type="entry name" value="deoB"/>
    <property type="match status" value="1"/>
</dbReference>
<dbReference type="NCBIfam" id="NF003766">
    <property type="entry name" value="PRK05362.1"/>
    <property type="match status" value="1"/>
</dbReference>
<dbReference type="PANTHER" id="PTHR21110">
    <property type="entry name" value="PHOSPHOPENTOMUTASE"/>
    <property type="match status" value="1"/>
</dbReference>
<dbReference type="PANTHER" id="PTHR21110:SF0">
    <property type="entry name" value="PHOSPHOPENTOMUTASE"/>
    <property type="match status" value="1"/>
</dbReference>
<dbReference type="Pfam" id="PF01676">
    <property type="entry name" value="Metalloenzyme"/>
    <property type="match status" value="1"/>
</dbReference>
<dbReference type="PIRSF" id="PIRSF001491">
    <property type="entry name" value="Ppentomutase"/>
    <property type="match status" value="1"/>
</dbReference>
<dbReference type="SUPFAM" id="SSF53649">
    <property type="entry name" value="Alkaline phosphatase-like"/>
    <property type="match status" value="1"/>
</dbReference>
<dbReference type="SUPFAM" id="SSF143856">
    <property type="entry name" value="DeoB insert domain-like"/>
    <property type="match status" value="1"/>
</dbReference>
<accession>Q02ZT2</accession>
<feature type="chain" id="PRO_1000046389" description="Phosphopentomutase">
    <location>
        <begin position="1"/>
        <end position="411"/>
    </location>
</feature>
<feature type="binding site" evidence="1">
    <location>
        <position position="14"/>
    </location>
    <ligand>
        <name>Mn(2+)</name>
        <dbReference type="ChEBI" id="CHEBI:29035"/>
        <label>1</label>
    </ligand>
</feature>
<feature type="binding site" evidence="1">
    <location>
        <position position="306"/>
    </location>
    <ligand>
        <name>Mn(2+)</name>
        <dbReference type="ChEBI" id="CHEBI:29035"/>
        <label>2</label>
    </ligand>
</feature>
<feature type="binding site" evidence="1">
    <location>
        <position position="311"/>
    </location>
    <ligand>
        <name>Mn(2+)</name>
        <dbReference type="ChEBI" id="CHEBI:29035"/>
        <label>2</label>
    </ligand>
</feature>
<feature type="binding site" evidence="1">
    <location>
        <position position="347"/>
    </location>
    <ligand>
        <name>Mn(2+)</name>
        <dbReference type="ChEBI" id="CHEBI:29035"/>
        <label>1</label>
    </ligand>
</feature>
<feature type="binding site" evidence="1">
    <location>
        <position position="348"/>
    </location>
    <ligand>
        <name>Mn(2+)</name>
        <dbReference type="ChEBI" id="CHEBI:29035"/>
        <label>1</label>
    </ligand>
</feature>
<feature type="binding site" evidence="1">
    <location>
        <position position="359"/>
    </location>
    <ligand>
        <name>Mn(2+)</name>
        <dbReference type="ChEBI" id="CHEBI:29035"/>
        <label>2</label>
    </ligand>
</feature>
<proteinExistence type="inferred from homology"/>
<reference key="1">
    <citation type="journal article" date="2006" name="Proc. Natl. Acad. Sci. U.S.A.">
        <title>Comparative genomics of the lactic acid bacteria.</title>
        <authorList>
            <person name="Makarova K.S."/>
            <person name="Slesarev A."/>
            <person name="Wolf Y.I."/>
            <person name="Sorokin A."/>
            <person name="Mirkin B."/>
            <person name="Koonin E.V."/>
            <person name="Pavlov A."/>
            <person name="Pavlova N."/>
            <person name="Karamychev V."/>
            <person name="Polouchine N."/>
            <person name="Shakhova V."/>
            <person name="Grigoriev I."/>
            <person name="Lou Y."/>
            <person name="Rohksar D."/>
            <person name="Lucas S."/>
            <person name="Huang K."/>
            <person name="Goodstein D.M."/>
            <person name="Hawkins T."/>
            <person name="Plengvidhya V."/>
            <person name="Welker D."/>
            <person name="Hughes J."/>
            <person name="Goh Y."/>
            <person name="Benson A."/>
            <person name="Baldwin K."/>
            <person name="Lee J.-H."/>
            <person name="Diaz-Muniz I."/>
            <person name="Dosti B."/>
            <person name="Smeianov V."/>
            <person name="Wechter W."/>
            <person name="Barabote R."/>
            <person name="Lorca G."/>
            <person name="Altermann E."/>
            <person name="Barrangou R."/>
            <person name="Ganesan B."/>
            <person name="Xie Y."/>
            <person name="Rawsthorne H."/>
            <person name="Tamir D."/>
            <person name="Parker C."/>
            <person name="Breidt F."/>
            <person name="Broadbent J.R."/>
            <person name="Hutkins R."/>
            <person name="O'Sullivan D."/>
            <person name="Steele J."/>
            <person name="Unlu G."/>
            <person name="Saier M.H. Jr."/>
            <person name="Klaenhammer T."/>
            <person name="Richardson P."/>
            <person name="Kozyavkin S."/>
            <person name="Weimer B.C."/>
            <person name="Mills D.A."/>
        </authorList>
    </citation>
    <scope>NUCLEOTIDE SEQUENCE [LARGE SCALE GENOMIC DNA]</scope>
    <source>
        <strain>SK11</strain>
    </source>
</reference>